<protein>
    <recommendedName>
        <fullName>Apolipoprotein E</fullName>
        <shortName>Apo-E</shortName>
    </recommendedName>
</protein>
<comment type="function">
    <text evidence="1">APOE is an apolipoprotein, a protein associating with lipid particles, that mainly functions in lipoprotein-mediated lipid transport between organs via the plasma and interstitial fluids. APOE is a core component of plasma lipoproteins and is involved in their production, conversion and clearance. Apolipoproteins are amphipathic molecules that interact both with lipids of the lipoprotein particle core and the aqueous environment of the plasma. As such, APOE associates with chylomicrons, chylomicron remnants, very low density lipoproteins (VLDL) and intermediate density lipoproteins (IDL) but shows a preferential binding to high-density lipoproteins (HDL). It also binds a wide range of cellular receptors including the LDL receptor/LDLR and the very low-density lipoprotein receptor/VLDLR that mediate the cellular uptake of the APOE-containing lipoprotein particles. Finally, APOE also has a heparin-binding activity and binds heparan-sulfate proteoglycans on the surface of cells, a property that supports the capture and the receptor-mediated uptake of APOE-containing lipoproteins by cells.</text>
</comment>
<comment type="subunit">
    <text evidence="1">Homotetramer. May interact with ABCA1; functionally associated with ABCA1 in the biogenesis of HDLs. May interact with APP/A4 amyloid-beta peptide; the interaction is extremely stable in vitro but its physiological significance is unclear. May interact with MAPT. May interact with MAP2. In the cerebrospinal fluid, interacts with secreted SORL1. Interacts with PMEL; this allows the loading of PMEL luminal fragment on ILVs to induce fibril nucleation.</text>
</comment>
<comment type="subcellular location">
    <subcellularLocation>
        <location evidence="1">Secreted</location>
    </subcellularLocation>
    <subcellularLocation>
        <location evidence="1">Secreted</location>
        <location evidence="1">Extracellular space</location>
    </subcellularLocation>
    <subcellularLocation>
        <location evidence="1">Secreted</location>
        <location evidence="1">Extracellular space</location>
        <location evidence="1">Extracellular matrix</location>
    </subcellularLocation>
    <subcellularLocation>
        <location evidence="1">Extracellular vesicle</location>
    </subcellularLocation>
    <subcellularLocation>
        <location evidence="1">Endosome</location>
        <location evidence="1">Multivesicular body</location>
    </subcellularLocation>
    <text evidence="1">In the plasma, APOE is associated with chylomicrons, chylomicrons remnants, VLDL, LDL and HDL lipoproteins. Lipid poor oligomeric APOE is associated with the extracellular matrix in a calcium- and heparan-sulfate proteoglycans-dependent manner. Lipidation induces the release from the extracellular matrix. Colocalizes with CD63 and PMEL at exosomes and in intraluminal vesicles within multivesicular endosomes.</text>
</comment>
<comment type="PTM">
    <text evidence="1">APOE exists as multiple glycosylated and sialylated glycoforms within cells and in plasma. The extent of glycosylation and sialylation are tissue and context specific.</text>
</comment>
<comment type="PTM">
    <text evidence="1">Glycated in plasma VLDL.</text>
</comment>
<comment type="PTM">
    <text evidence="1">Phosphorylated by FAM20C in the extracellular medium.</text>
</comment>
<comment type="similarity">
    <text evidence="4">Belongs to the apolipoprotein A1/A4/E family.</text>
</comment>
<sequence length="316" mass="36083">MKVLWVALVVALLAGCQADMEGELGSEEPLPPEQPRGQDSQPWEQVLGRLWDYLRWVQTLSDQVQEELLNTQVIQELTVLMEETMKEVKAYREELEGQLAPMAQETQARVSKELQAAQARLGSDMEDLRNRLAQYRSEVQAMLGQSTEELRARMASHLRKLRKRLLRDADDLKKRLAVYQAGASEGAERSVSAIRERLRPLVEQGQSRAATLSTQAAQPLLDRAEAWRQKLHGRLEEVGVRAQDRLDKMRQQLEEVRAKVEEQGSQIRLQAEAFQARLRSWFEPLVGDMQRQWAGLVEKVQLALHLSPTSPPSENH</sequence>
<dbReference type="EMBL" id="CBYH010014123">
    <property type="status" value="NOT_ANNOTATED_CDS"/>
    <property type="molecule type" value="Genomic_DNA"/>
</dbReference>
<dbReference type="SMR" id="P0DN38"/>
<dbReference type="GlyCosmos" id="P0DN38">
    <property type="glycosylation" value="1 site, No reported glycans"/>
</dbReference>
<dbReference type="GO" id="GO:0042627">
    <property type="term" value="C:chylomicron"/>
    <property type="evidence" value="ECO:0007669"/>
    <property type="project" value="UniProtKB-KW"/>
</dbReference>
<dbReference type="GO" id="GO:0070062">
    <property type="term" value="C:extracellular exosome"/>
    <property type="evidence" value="ECO:0000250"/>
    <property type="project" value="UniProtKB"/>
</dbReference>
<dbReference type="GO" id="GO:0031012">
    <property type="term" value="C:extracellular matrix"/>
    <property type="evidence" value="ECO:0000250"/>
    <property type="project" value="UniProtKB"/>
</dbReference>
<dbReference type="GO" id="GO:0005615">
    <property type="term" value="C:extracellular space"/>
    <property type="evidence" value="ECO:0000250"/>
    <property type="project" value="UniProtKB"/>
</dbReference>
<dbReference type="GO" id="GO:0034364">
    <property type="term" value="C:high-density lipoprotein particle"/>
    <property type="evidence" value="ECO:0000250"/>
    <property type="project" value="UniProtKB"/>
</dbReference>
<dbReference type="GO" id="GO:0034363">
    <property type="term" value="C:intermediate-density lipoprotein particle"/>
    <property type="evidence" value="ECO:0000250"/>
    <property type="project" value="UniProtKB"/>
</dbReference>
<dbReference type="GO" id="GO:0034362">
    <property type="term" value="C:low-density lipoprotein particle"/>
    <property type="evidence" value="ECO:0000250"/>
    <property type="project" value="UniProtKB"/>
</dbReference>
<dbReference type="GO" id="GO:0097487">
    <property type="term" value="C:multivesicular body, internal vesicle"/>
    <property type="evidence" value="ECO:0000250"/>
    <property type="project" value="UniProtKB"/>
</dbReference>
<dbReference type="GO" id="GO:0034361">
    <property type="term" value="C:very-low-density lipoprotein particle"/>
    <property type="evidence" value="ECO:0000250"/>
    <property type="project" value="UniProtKB"/>
</dbReference>
<dbReference type="GO" id="GO:0120020">
    <property type="term" value="F:cholesterol transfer activity"/>
    <property type="evidence" value="ECO:0007669"/>
    <property type="project" value="TreeGrafter"/>
</dbReference>
<dbReference type="GO" id="GO:0043395">
    <property type="term" value="F:heparan sulfate proteoglycan binding"/>
    <property type="evidence" value="ECO:0000250"/>
    <property type="project" value="UniProtKB"/>
</dbReference>
<dbReference type="GO" id="GO:0008201">
    <property type="term" value="F:heparin binding"/>
    <property type="evidence" value="ECO:0000250"/>
    <property type="project" value="UniProtKB"/>
</dbReference>
<dbReference type="GO" id="GO:0042802">
    <property type="term" value="F:identical protein binding"/>
    <property type="evidence" value="ECO:0000250"/>
    <property type="project" value="UniProtKB"/>
</dbReference>
<dbReference type="GO" id="GO:0050750">
    <property type="term" value="F:low-density lipoprotein particle receptor binding"/>
    <property type="evidence" value="ECO:0000250"/>
    <property type="project" value="UniProtKB"/>
</dbReference>
<dbReference type="GO" id="GO:0060228">
    <property type="term" value="F:phosphatidylcholine-sterol O-acyltransferase activator activity"/>
    <property type="evidence" value="ECO:0007669"/>
    <property type="project" value="TreeGrafter"/>
</dbReference>
<dbReference type="GO" id="GO:0005543">
    <property type="term" value="F:phospholipid binding"/>
    <property type="evidence" value="ECO:0007669"/>
    <property type="project" value="TreeGrafter"/>
</dbReference>
<dbReference type="GO" id="GO:0055090">
    <property type="term" value="P:acylglycerol homeostasis"/>
    <property type="evidence" value="ECO:0007669"/>
    <property type="project" value="TreeGrafter"/>
</dbReference>
<dbReference type="GO" id="GO:0033344">
    <property type="term" value="P:cholesterol efflux"/>
    <property type="evidence" value="ECO:0000250"/>
    <property type="project" value="UniProtKB"/>
</dbReference>
<dbReference type="GO" id="GO:0008203">
    <property type="term" value="P:cholesterol metabolic process"/>
    <property type="evidence" value="ECO:0007669"/>
    <property type="project" value="TreeGrafter"/>
</dbReference>
<dbReference type="GO" id="GO:0034382">
    <property type="term" value="P:chylomicron remnant clearance"/>
    <property type="evidence" value="ECO:0000250"/>
    <property type="project" value="UniProtKB"/>
</dbReference>
<dbReference type="GO" id="GO:0034380">
    <property type="term" value="P:high-density lipoprotein particle assembly"/>
    <property type="evidence" value="ECO:0000250"/>
    <property type="project" value="UniProtKB"/>
</dbReference>
<dbReference type="GO" id="GO:0071831">
    <property type="term" value="P:intermediate-density lipoprotein particle clearance"/>
    <property type="evidence" value="ECO:0000250"/>
    <property type="project" value="UniProtKB"/>
</dbReference>
<dbReference type="GO" id="GO:0042158">
    <property type="term" value="P:lipoprotein biosynthetic process"/>
    <property type="evidence" value="ECO:0000250"/>
    <property type="project" value="UniProtKB"/>
</dbReference>
<dbReference type="GO" id="GO:0032438">
    <property type="term" value="P:melanosome organization"/>
    <property type="evidence" value="ECO:0000250"/>
    <property type="project" value="UniProtKB"/>
</dbReference>
<dbReference type="GO" id="GO:1905907">
    <property type="term" value="P:negative regulation of amyloid fibril formation"/>
    <property type="evidence" value="ECO:0000250"/>
    <property type="project" value="UniProtKB"/>
</dbReference>
<dbReference type="GO" id="GO:0033700">
    <property type="term" value="P:phospholipid efflux"/>
    <property type="evidence" value="ECO:0007669"/>
    <property type="project" value="TreeGrafter"/>
</dbReference>
<dbReference type="GO" id="GO:1900223">
    <property type="term" value="P:positive regulation of amyloid-beta clearance"/>
    <property type="evidence" value="ECO:0000250"/>
    <property type="project" value="UniProtKB"/>
</dbReference>
<dbReference type="GO" id="GO:0071830">
    <property type="term" value="P:triglyceride-rich lipoprotein particle clearance"/>
    <property type="evidence" value="ECO:0000250"/>
    <property type="project" value="UniProtKB"/>
</dbReference>
<dbReference type="GO" id="GO:0034447">
    <property type="term" value="P:very-low-density lipoprotein particle clearance"/>
    <property type="evidence" value="ECO:0000250"/>
    <property type="project" value="UniProtKB"/>
</dbReference>
<dbReference type="FunFam" id="1.20.120.20:FF:000002">
    <property type="entry name" value="Apolipoprotein E"/>
    <property type="match status" value="1"/>
</dbReference>
<dbReference type="FunFam" id="1.20.120.20:FF:000003">
    <property type="entry name" value="Apolipoprotein E"/>
    <property type="match status" value="1"/>
</dbReference>
<dbReference type="Gene3D" id="1.20.120.20">
    <property type="entry name" value="Apolipoprotein"/>
    <property type="match status" value="2"/>
</dbReference>
<dbReference type="InterPro" id="IPR000074">
    <property type="entry name" value="ApoA_E"/>
</dbReference>
<dbReference type="InterPro" id="IPR050163">
    <property type="entry name" value="Apolipoprotein_A1/A4/E"/>
</dbReference>
<dbReference type="PANTHER" id="PTHR18976">
    <property type="entry name" value="APOLIPOPROTEIN"/>
    <property type="match status" value="1"/>
</dbReference>
<dbReference type="PANTHER" id="PTHR18976:SF2">
    <property type="entry name" value="APOLIPOPROTEIN E"/>
    <property type="match status" value="1"/>
</dbReference>
<dbReference type="Pfam" id="PF01442">
    <property type="entry name" value="Apolipoprotein"/>
    <property type="match status" value="1"/>
</dbReference>
<dbReference type="SUPFAM" id="SSF58113">
    <property type="entry name" value="Apolipoprotein A-I"/>
    <property type="match status" value="1"/>
</dbReference>
<accession>P0DN38</accession>
<name>APOE_CAPHE</name>
<feature type="signal peptide" evidence="3">
    <location>
        <begin position="1"/>
        <end position="18"/>
    </location>
</feature>
<feature type="chain" id="PRO_0000435010" description="Apolipoprotein E">
    <location>
        <begin position="19"/>
        <end position="316"/>
    </location>
</feature>
<feature type="repeat" description="1">
    <location>
        <begin position="79"/>
        <end position="100"/>
    </location>
</feature>
<feature type="repeat" description="2">
    <location>
        <begin position="101"/>
        <end position="122"/>
    </location>
</feature>
<feature type="repeat" description="3">
    <location>
        <begin position="123"/>
        <end position="144"/>
    </location>
</feature>
<feature type="repeat" description="4">
    <location>
        <begin position="145"/>
        <end position="166"/>
    </location>
</feature>
<feature type="repeat" description="5">
    <location>
        <begin position="167"/>
        <end position="188"/>
    </location>
</feature>
<feature type="repeat" description="6">
    <location>
        <begin position="189"/>
        <end position="210"/>
    </location>
</feature>
<feature type="repeat" description="7">
    <location>
        <begin position="211"/>
        <end position="232"/>
    </location>
</feature>
<feature type="repeat" description="8">
    <location>
        <begin position="233"/>
        <end position="254"/>
    </location>
</feature>
<feature type="region of interest" description="8 X 22 AA approximate tandem repeats">
    <location>
        <begin position="79"/>
        <end position="254"/>
    </location>
</feature>
<feature type="region of interest" description="LDL and other lipoprotein receptors binding" evidence="1">
    <location>
        <begin position="157"/>
        <end position="167"/>
    </location>
</feature>
<feature type="region of interest" description="Lipid-binding and lipoprotein association" evidence="1">
    <location>
        <begin position="209"/>
        <end position="289"/>
    </location>
</feature>
<feature type="region of interest" description="Homooligomerization" evidence="1">
    <location>
        <begin position="265"/>
        <end position="316"/>
    </location>
</feature>
<feature type="region of interest" description="Specificity for association with VLDL" evidence="1">
    <location>
        <begin position="277"/>
        <end position="289"/>
    </location>
</feature>
<feature type="binding site" evidence="1">
    <location>
        <begin position="161"/>
        <end position="164"/>
    </location>
    <ligand>
        <name>heparin</name>
        <dbReference type="ChEBI" id="CHEBI:28304"/>
    </ligand>
</feature>
<feature type="binding site" evidence="1">
    <location>
        <begin position="228"/>
        <end position="235"/>
    </location>
    <ligand>
        <name>heparin</name>
        <dbReference type="ChEBI" id="CHEBI:28304"/>
    </ligand>
</feature>
<feature type="modified residue" description="Methionine sulfoxide" evidence="2">
    <location>
        <position position="142"/>
    </location>
</feature>
<feature type="modified residue" description="Phosphoserine" evidence="1">
    <location>
        <position position="146"/>
    </location>
</feature>
<feature type="glycosylation site" description="O-linked (GalNAc...) threonine" evidence="1">
    <location>
        <position position="211"/>
    </location>
</feature>
<gene>
    <name type="primary">APOE</name>
</gene>
<proteinExistence type="inferred from homology"/>
<evidence type="ECO:0000250" key="1">
    <source>
        <dbReference type="UniProtKB" id="P02649"/>
    </source>
</evidence>
<evidence type="ECO:0000250" key="2">
    <source>
        <dbReference type="UniProtKB" id="P08226"/>
    </source>
</evidence>
<evidence type="ECO:0000255" key="3"/>
<evidence type="ECO:0000305" key="4"/>
<keyword id="KW-0162">Chylomicron</keyword>
<keyword id="KW-0967">Endosome</keyword>
<keyword id="KW-0272">Extracellular matrix</keyword>
<keyword id="KW-0325">Glycoprotein</keyword>
<keyword id="KW-0345">HDL</keyword>
<keyword id="KW-0358">Heparin-binding</keyword>
<keyword id="KW-0445">Lipid transport</keyword>
<keyword id="KW-0446">Lipid-binding</keyword>
<keyword id="KW-0558">Oxidation</keyword>
<keyword id="KW-0597">Phosphoprotein</keyword>
<keyword id="KW-0677">Repeat</keyword>
<keyword id="KW-0964">Secreted</keyword>
<keyword id="KW-0732">Signal</keyword>
<keyword id="KW-0813">Transport</keyword>
<keyword id="KW-0850">VLDL</keyword>
<organism>
    <name type="scientific">Capra hircus aegagrus</name>
    <name type="common">Wild goat</name>
    <name type="synonym">Capra aegagrus</name>
    <dbReference type="NCBI Taxonomy" id="9923"/>
    <lineage>
        <taxon>Eukaryota</taxon>
        <taxon>Metazoa</taxon>
        <taxon>Chordata</taxon>
        <taxon>Craniata</taxon>
        <taxon>Vertebrata</taxon>
        <taxon>Euteleostomi</taxon>
        <taxon>Mammalia</taxon>
        <taxon>Eutheria</taxon>
        <taxon>Laurasiatheria</taxon>
        <taxon>Artiodactyla</taxon>
        <taxon>Ruminantia</taxon>
        <taxon>Pecora</taxon>
        <taxon>Bovidae</taxon>
        <taxon>Caprinae</taxon>
        <taxon>Capra</taxon>
    </lineage>
</organism>
<reference key="1">
    <citation type="submission" date="2014-02" db="EMBL/GenBank/DDBJ databases">
        <authorList>
            <person name="Streeter I."/>
        </authorList>
    </citation>
    <scope>NUCLEOTIDE SEQUENCE [LARGE SCALE GENOMIC DNA]</scope>
</reference>
<reference key="2">
    <citation type="unpublished observations" date="2015-10">
        <authorList>
            <person name="Puppione D.L."/>
        </authorList>
    </citation>
    <scope>IDENTIFICATION</scope>
</reference>